<feature type="chain" id="PRO_0000054150" description="Dicarboxylic amino acid permease">
    <location>
        <begin position="1"/>
        <end position="608"/>
    </location>
</feature>
<feature type="topological domain" description="Cytoplasmic" evidence="1">
    <location>
        <begin position="1"/>
        <end position="90"/>
    </location>
</feature>
<feature type="transmembrane region" description="Helical" evidence="1">
    <location>
        <begin position="91"/>
        <end position="111"/>
    </location>
</feature>
<feature type="topological domain" description="Extracellular" evidence="1">
    <location>
        <begin position="112"/>
        <end position="119"/>
    </location>
</feature>
<feature type="transmembrane region" description="Helical" evidence="1">
    <location>
        <begin position="120"/>
        <end position="142"/>
    </location>
</feature>
<feature type="topological domain" description="Cytoplasmic" evidence="1">
    <location>
        <begin position="143"/>
        <end position="156"/>
    </location>
</feature>
<feature type="transmembrane region" description="Helical" evidence="1">
    <location>
        <begin position="157"/>
        <end position="177"/>
    </location>
</feature>
<feature type="topological domain" description="Extracellular" evidence="1">
    <location>
        <begin position="178"/>
        <end position="201"/>
    </location>
</feature>
<feature type="transmembrane region" description="Helical" evidence="1">
    <location>
        <begin position="202"/>
        <end position="222"/>
    </location>
</feature>
<feature type="topological domain" description="Cytoplasmic" evidence="1">
    <location>
        <begin position="223"/>
        <end position="231"/>
    </location>
</feature>
<feature type="transmembrane region" description="Helical" evidence="1">
    <location>
        <begin position="232"/>
        <end position="252"/>
    </location>
</feature>
<feature type="topological domain" description="Extracellular" evidence="1">
    <location>
        <begin position="253"/>
        <end position="285"/>
    </location>
</feature>
<feature type="transmembrane region" description="Helical" evidence="1">
    <location>
        <begin position="286"/>
        <end position="306"/>
    </location>
</feature>
<feature type="topological domain" description="Cytoplasmic" evidence="1">
    <location>
        <begin position="307"/>
        <end position="322"/>
    </location>
</feature>
<feature type="transmembrane region" description="Helical" evidence="1">
    <location>
        <begin position="323"/>
        <end position="343"/>
    </location>
</feature>
<feature type="topological domain" description="Extracellular" evidence="1">
    <location>
        <begin position="344"/>
        <end position="372"/>
    </location>
</feature>
<feature type="transmembrane region" description="Helical" evidence="1">
    <location>
        <begin position="373"/>
        <end position="393"/>
    </location>
</feature>
<feature type="topological domain" description="Cytoplasmic" evidence="1">
    <location>
        <begin position="394"/>
        <end position="423"/>
    </location>
</feature>
<feature type="transmembrane region" description="Helical" evidence="1">
    <location>
        <begin position="424"/>
        <end position="444"/>
    </location>
</feature>
<feature type="topological domain" description="Extracellular" evidence="1">
    <location>
        <begin position="445"/>
        <end position="454"/>
    </location>
</feature>
<feature type="transmembrane region" description="Helical" evidence="1">
    <location>
        <begin position="455"/>
        <end position="475"/>
    </location>
</feature>
<feature type="topological domain" description="Cytoplasmic" evidence="1">
    <location>
        <begin position="476"/>
        <end position="501"/>
    </location>
</feature>
<feature type="transmembrane region" description="Helical" evidence="1">
    <location>
        <begin position="502"/>
        <end position="522"/>
    </location>
</feature>
<feature type="topological domain" description="Extracellular" evidence="1">
    <location>
        <begin position="523"/>
        <end position="530"/>
    </location>
</feature>
<feature type="transmembrane region" description="Helical" evidence="1">
    <location>
        <begin position="531"/>
        <end position="551"/>
    </location>
</feature>
<feature type="topological domain" description="Cytoplasmic" evidence="1">
    <location>
        <begin position="552"/>
        <end position="608"/>
    </location>
</feature>
<feature type="region of interest" description="Disordered" evidence="2">
    <location>
        <begin position="1"/>
        <end position="77"/>
    </location>
</feature>
<feature type="compositionally biased region" description="Polar residues" evidence="2">
    <location>
        <begin position="9"/>
        <end position="20"/>
    </location>
</feature>
<feature type="compositionally biased region" description="Low complexity" evidence="2">
    <location>
        <begin position="54"/>
        <end position="64"/>
    </location>
</feature>
<feature type="compositionally biased region" description="Basic and acidic residues" evidence="2">
    <location>
        <begin position="65"/>
        <end position="77"/>
    </location>
</feature>
<feature type="modified residue" description="Phosphoserine" evidence="6">
    <location>
        <position position="22"/>
    </location>
</feature>
<feature type="cross-link" description="Glycyl lysine isopeptide (Lys-Gly) (interchain with G-Cter in ubiquitin)" evidence="7">
    <location>
        <position position="76"/>
    </location>
</feature>
<sequence>MKMPLKKMFTSTSPRNSSSLDSDHDAYYSKQNPDNFPVKEQEIYNIDLEENNVSSRSSTSTSPSARDDSFAVPDGKDENTRLRKDLKARHISMIAIGGSLGTGLLIGTGTALLTGGPVAMLIAYAFVGLLVFYTMACLGEMASYIPLDGFTSYASRYVDPALGFAIGYTYLFKYFILPPNQLTAAALVIQYWISRDRVNPGVWITIFLVVIVAINVVGVKFFGEFEFWLSSFKVMVMLGLILLLFIIMLGGGPNHDRLGFRYWRDPGAFKEYSTAITGGKGKFVSFVAVFVYSLFSYTGIELTGIVCSEAENPRKSVPKAIKLTVYRIIVFYLCTVFLLGMCVAYNDPRLLSTKGKSMSAAASPFVVAIQNSGIEVLPHIFNACVLVFVFSACNSDLYVSSRNLYALAIDGKAPKIFAKTSRWGVPYNALILSVLFCGLAYMNVSSGSAKIFNYFVNVVSMFGILSWITILIVYIYFDKACRAQGIDKSKFAYVAPGQRYGAYFALFFCILIALIKNFTVFLGHKFDYKTFITGYIGLPVYIISWAGYKLIYKTKVIKSTDVDLYTFKEIYDREEEEGRMKDQEKEERLKSNGKNMEWFYEKFLGNIF</sequence>
<protein>
    <recommendedName>
        <fullName>Dicarboxylic amino acid permease</fullName>
    </recommendedName>
</protein>
<gene>
    <name type="primary">DIP5</name>
    <name type="ordered locus">YPL265W</name>
</gene>
<organism>
    <name type="scientific">Saccharomyces cerevisiae (strain ATCC 204508 / S288c)</name>
    <name type="common">Baker's yeast</name>
    <dbReference type="NCBI Taxonomy" id="559292"/>
    <lineage>
        <taxon>Eukaryota</taxon>
        <taxon>Fungi</taxon>
        <taxon>Dikarya</taxon>
        <taxon>Ascomycota</taxon>
        <taxon>Saccharomycotina</taxon>
        <taxon>Saccharomycetes</taxon>
        <taxon>Saccharomycetales</taxon>
        <taxon>Saccharomycetaceae</taxon>
        <taxon>Saccharomyces</taxon>
    </lineage>
</organism>
<proteinExistence type="evidence at protein level"/>
<reference key="1">
    <citation type="submission" date="1996-03" db="EMBL/GenBank/DDBJ databases">
        <authorList>
            <person name="Vissers S."/>
            <person name="Grosjean S."/>
            <person name="Andre B."/>
        </authorList>
    </citation>
    <scope>NUCLEOTIDE SEQUENCE [GENOMIC DNA]</scope>
    <source>
        <strain>Sigma 1278B</strain>
    </source>
</reference>
<reference key="2">
    <citation type="journal article" date="1997" name="Nature">
        <title>The nucleotide sequence of Saccharomyces cerevisiae chromosome XVI.</title>
        <authorList>
            <person name="Bussey H."/>
            <person name="Storms R.K."/>
            <person name="Ahmed A."/>
            <person name="Albermann K."/>
            <person name="Allen E."/>
            <person name="Ansorge W."/>
            <person name="Araujo R."/>
            <person name="Aparicio A."/>
            <person name="Barrell B.G."/>
            <person name="Badcock K."/>
            <person name="Benes V."/>
            <person name="Botstein D."/>
            <person name="Bowman S."/>
            <person name="Brueckner M."/>
            <person name="Carpenter J."/>
            <person name="Cherry J.M."/>
            <person name="Chung E."/>
            <person name="Churcher C.M."/>
            <person name="Coster F."/>
            <person name="Davis K."/>
            <person name="Davis R.W."/>
            <person name="Dietrich F.S."/>
            <person name="Delius H."/>
            <person name="DiPaolo T."/>
            <person name="Dubois E."/>
            <person name="Duesterhoeft A."/>
            <person name="Duncan M."/>
            <person name="Floeth M."/>
            <person name="Fortin N."/>
            <person name="Friesen J.D."/>
            <person name="Fritz C."/>
            <person name="Goffeau A."/>
            <person name="Hall J."/>
            <person name="Hebling U."/>
            <person name="Heumann K."/>
            <person name="Hilbert H."/>
            <person name="Hillier L.W."/>
            <person name="Hunicke-Smith S."/>
            <person name="Hyman R.W."/>
            <person name="Johnston M."/>
            <person name="Kalman S."/>
            <person name="Kleine K."/>
            <person name="Komp C."/>
            <person name="Kurdi O."/>
            <person name="Lashkari D."/>
            <person name="Lew H."/>
            <person name="Lin A."/>
            <person name="Lin D."/>
            <person name="Louis E.J."/>
            <person name="Marathe R."/>
            <person name="Messenguy F."/>
            <person name="Mewes H.-W."/>
            <person name="Mirtipati S."/>
            <person name="Moestl D."/>
            <person name="Mueller-Auer S."/>
            <person name="Namath A."/>
            <person name="Nentwich U."/>
            <person name="Oefner P."/>
            <person name="Pearson D."/>
            <person name="Petel F.X."/>
            <person name="Pohl T.M."/>
            <person name="Purnelle B."/>
            <person name="Rajandream M.A."/>
            <person name="Rechmann S."/>
            <person name="Rieger M."/>
            <person name="Riles L."/>
            <person name="Roberts D."/>
            <person name="Schaefer M."/>
            <person name="Scharfe M."/>
            <person name="Scherens B."/>
            <person name="Schramm S."/>
            <person name="Schroeder M."/>
            <person name="Sdicu A.-M."/>
            <person name="Tettelin H."/>
            <person name="Urrestarazu L.A."/>
            <person name="Ushinsky S."/>
            <person name="Vierendeels F."/>
            <person name="Vissers S."/>
            <person name="Voss H."/>
            <person name="Walsh S.V."/>
            <person name="Wambutt R."/>
            <person name="Wang Y."/>
            <person name="Wedler E."/>
            <person name="Wedler H."/>
            <person name="Winnett E."/>
            <person name="Zhong W.-W."/>
            <person name="Zollner A."/>
            <person name="Vo D.H."/>
            <person name="Hani J."/>
        </authorList>
    </citation>
    <scope>NUCLEOTIDE SEQUENCE [LARGE SCALE GENOMIC DNA]</scope>
    <source>
        <strain>ATCC 204508 / S288c</strain>
    </source>
</reference>
<reference key="3">
    <citation type="journal article" date="2014" name="G3 (Bethesda)">
        <title>The reference genome sequence of Saccharomyces cerevisiae: Then and now.</title>
        <authorList>
            <person name="Engel S.R."/>
            <person name="Dietrich F.S."/>
            <person name="Fisk D.G."/>
            <person name="Binkley G."/>
            <person name="Balakrishnan R."/>
            <person name="Costanzo M.C."/>
            <person name="Dwight S.S."/>
            <person name="Hitz B.C."/>
            <person name="Karra K."/>
            <person name="Nash R.S."/>
            <person name="Weng S."/>
            <person name="Wong E.D."/>
            <person name="Lloyd P."/>
            <person name="Skrzypek M.S."/>
            <person name="Miyasato S.R."/>
            <person name="Simison M."/>
            <person name="Cherry J.M."/>
        </authorList>
    </citation>
    <scope>GENOME REANNOTATION</scope>
    <source>
        <strain>ATCC 204508 / S288c</strain>
    </source>
</reference>
<reference key="4">
    <citation type="journal article" date="1999" name="Curr. Genet.">
        <title>Substrate specificity and gene expression of the amino-acid permeases in Saccharomyces cerevisiae.</title>
        <authorList>
            <person name="Regenberg B."/>
            <person name="During-Olsen L."/>
            <person name="Kielland-Brandt M.C."/>
            <person name="Holmberg S."/>
        </authorList>
    </citation>
    <scope>FUNCTION</scope>
</reference>
<reference key="5">
    <citation type="journal article" date="2003" name="Nature">
        <title>Global analysis of protein expression in yeast.</title>
        <authorList>
            <person name="Ghaemmaghami S."/>
            <person name="Huh W.-K."/>
            <person name="Bower K."/>
            <person name="Howson R.W."/>
            <person name="Belle A."/>
            <person name="Dephoure N."/>
            <person name="O'Shea E.K."/>
            <person name="Weissman J.S."/>
        </authorList>
    </citation>
    <scope>LEVEL OF PROTEIN EXPRESSION [LARGE SCALE ANALYSIS]</scope>
</reference>
<reference key="6">
    <citation type="journal article" date="2006" name="Proc. Natl. Acad. Sci. U.S.A.">
        <title>A global topology map of the Saccharomyces cerevisiae membrane proteome.</title>
        <authorList>
            <person name="Kim H."/>
            <person name="Melen K."/>
            <person name="Oesterberg M."/>
            <person name="von Heijne G."/>
        </authorList>
    </citation>
    <scope>TOPOLOGY [LARGE SCALE ANALYSIS]</scope>
    <source>
        <strain>ATCC 208353 / W303-1A</strain>
    </source>
</reference>
<reference key="7">
    <citation type="journal article" date="2008" name="Mol. Cell. Proteomics">
        <title>A multidimensional chromatography technology for in-depth phosphoproteome analysis.</title>
        <authorList>
            <person name="Albuquerque C.P."/>
            <person name="Smolka M.B."/>
            <person name="Payne S.H."/>
            <person name="Bafna V."/>
            <person name="Eng J."/>
            <person name="Zhou H."/>
        </authorList>
    </citation>
    <scope>IDENTIFICATION BY MASS SPECTROMETRY [LARGE SCALE ANALYSIS]</scope>
</reference>
<reference key="8">
    <citation type="journal article" date="2009" name="Science">
        <title>Global analysis of Cdk1 substrate phosphorylation sites provides insights into evolution.</title>
        <authorList>
            <person name="Holt L.J."/>
            <person name="Tuch B.B."/>
            <person name="Villen J."/>
            <person name="Johnson A.D."/>
            <person name="Gygi S.P."/>
            <person name="Morgan D.O."/>
        </authorList>
    </citation>
    <scope>PHOSPHORYLATION [LARGE SCALE ANALYSIS] AT SER-22</scope>
    <scope>IDENTIFICATION BY MASS SPECTROMETRY [LARGE SCALE ANALYSIS]</scope>
</reference>
<reference key="9">
    <citation type="journal article" date="2012" name="Proteomics">
        <title>Sites of ubiquitin attachment in Saccharomyces cerevisiae.</title>
        <authorList>
            <person name="Starita L.M."/>
            <person name="Lo R.S."/>
            <person name="Eng J.K."/>
            <person name="von Haller P.D."/>
            <person name="Fields S."/>
        </authorList>
    </citation>
    <scope>UBIQUITINATION [LARGE SCALE ANALYSIS] AT LYS-76</scope>
    <scope>IDENTIFICATION BY MASS SPECTROMETRY [LARGE SCALE ANALYSIS]</scope>
</reference>
<evidence type="ECO:0000255" key="1"/>
<evidence type="ECO:0000256" key="2">
    <source>
        <dbReference type="SAM" id="MobiDB-lite"/>
    </source>
</evidence>
<evidence type="ECO:0000269" key="3">
    <source>
    </source>
</evidence>
<evidence type="ECO:0000269" key="4">
    <source>
    </source>
</evidence>
<evidence type="ECO:0000305" key="5"/>
<evidence type="ECO:0007744" key="6">
    <source>
    </source>
</evidence>
<evidence type="ECO:0007744" key="7">
    <source>
    </source>
</evidence>
<name>DIP5_YEAST</name>
<dbReference type="EMBL" id="X95802">
    <property type="protein sequence ID" value="CAA65074.1"/>
    <property type="molecule type" value="Genomic_DNA"/>
</dbReference>
<dbReference type="EMBL" id="Z73621">
    <property type="protein sequence ID" value="CAA98000.1"/>
    <property type="molecule type" value="Genomic_DNA"/>
</dbReference>
<dbReference type="EMBL" id="BK006949">
    <property type="protein sequence ID" value="DAA11171.1"/>
    <property type="molecule type" value="Genomic_DNA"/>
</dbReference>
<dbReference type="PIR" id="S65298">
    <property type="entry name" value="S65298"/>
</dbReference>
<dbReference type="RefSeq" id="NP_015058.1">
    <property type="nucleotide sequence ID" value="NM_001184079.1"/>
</dbReference>
<dbReference type="SMR" id="P53388"/>
<dbReference type="BioGRID" id="35948">
    <property type="interactions" value="98"/>
</dbReference>
<dbReference type="DIP" id="DIP-5540N"/>
<dbReference type="FunCoup" id="P53388">
    <property type="interactions" value="258"/>
</dbReference>
<dbReference type="IntAct" id="P53388">
    <property type="interactions" value="25"/>
</dbReference>
<dbReference type="MINT" id="P53388"/>
<dbReference type="STRING" id="4932.YPL265W"/>
<dbReference type="TCDB" id="2.A.3.10.13">
    <property type="family name" value="the amino acid-polyamine-organocation (apc) family"/>
</dbReference>
<dbReference type="iPTMnet" id="P53388"/>
<dbReference type="PaxDb" id="4932-YPL265W"/>
<dbReference type="PeptideAtlas" id="P53388"/>
<dbReference type="EnsemblFungi" id="YPL265W_mRNA">
    <property type="protein sequence ID" value="YPL265W"/>
    <property type="gene ID" value="YPL265W"/>
</dbReference>
<dbReference type="GeneID" id="855863"/>
<dbReference type="KEGG" id="sce:YPL265W"/>
<dbReference type="AGR" id="SGD:S000006186"/>
<dbReference type="SGD" id="S000006186">
    <property type="gene designation" value="DIP5"/>
</dbReference>
<dbReference type="VEuPathDB" id="FungiDB:YPL265W"/>
<dbReference type="eggNOG" id="KOG1286">
    <property type="taxonomic scope" value="Eukaryota"/>
</dbReference>
<dbReference type="HOGENOM" id="CLU_007946_12_1_1"/>
<dbReference type="InParanoid" id="P53388"/>
<dbReference type="OMA" id="FWSVMVN"/>
<dbReference type="OrthoDB" id="3900342at2759"/>
<dbReference type="BioCyc" id="YEAST:G3O-34148-MONOMER"/>
<dbReference type="BioGRID-ORCS" id="855863">
    <property type="hits" value="0 hits in 10 CRISPR screens"/>
</dbReference>
<dbReference type="PRO" id="PR:P53388"/>
<dbReference type="Proteomes" id="UP000002311">
    <property type="component" value="Chromosome XVI"/>
</dbReference>
<dbReference type="RNAct" id="P53388">
    <property type="molecule type" value="protein"/>
</dbReference>
<dbReference type="GO" id="GO:0071944">
    <property type="term" value="C:cell periphery"/>
    <property type="evidence" value="ECO:0007005"/>
    <property type="project" value="SGD"/>
</dbReference>
<dbReference type="GO" id="GO:0000324">
    <property type="term" value="C:fungal-type vacuole"/>
    <property type="evidence" value="ECO:0007005"/>
    <property type="project" value="SGD"/>
</dbReference>
<dbReference type="GO" id="GO:0000329">
    <property type="term" value="C:fungal-type vacuole membrane"/>
    <property type="evidence" value="ECO:0007005"/>
    <property type="project" value="SGD"/>
</dbReference>
<dbReference type="GO" id="GO:0016020">
    <property type="term" value="C:membrane"/>
    <property type="evidence" value="ECO:0000318"/>
    <property type="project" value="GO_Central"/>
</dbReference>
<dbReference type="GO" id="GO:0005886">
    <property type="term" value="C:plasma membrane"/>
    <property type="evidence" value="ECO:0007005"/>
    <property type="project" value="SGD"/>
</dbReference>
<dbReference type="GO" id="GO:0015171">
    <property type="term" value="F:amino acid transmembrane transporter activity"/>
    <property type="evidence" value="ECO:0000318"/>
    <property type="project" value="GO_Central"/>
</dbReference>
<dbReference type="GO" id="GO:0005310">
    <property type="term" value="F:dicarboxylic acid transmembrane transporter activity"/>
    <property type="evidence" value="ECO:0000314"/>
    <property type="project" value="SGD"/>
</dbReference>
<dbReference type="GO" id="GO:0003333">
    <property type="term" value="P:amino acid transmembrane transport"/>
    <property type="evidence" value="ECO:0000318"/>
    <property type="project" value="GO_Central"/>
</dbReference>
<dbReference type="GO" id="GO:0006865">
    <property type="term" value="P:amino acid transport"/>
    <property type="evidence" value="ECO:0000314"/>
    <property type="project" value="SGD"/>
</dbReference>
<dbReference type="FunFam" id="1.20.1740.10:FF:000006">
    <property type="entry name" value="General amino acid permease"/>
    <property type="match status" value="1"/>
</dbReference>
<dbReference type="Gene3D" id="1.20.1740.10">
    <property type="entry name" value="Amino acid/polyamine transporter I"/>
    <property type="match status" value="1"/>
</dbReference>
<dbReference type="InterPro" id="IPR004841">
    <property type="entry name" value="AA-permease/SLC12A_dom"/>
</dbReference>
<dbReference type="InterPro" id="IPR004840">
    <property type="entry name" value="Amino_acid_permease_CS"/>
</dbReference>
<dbReference type="InterPro" id="IPR004762">
    <property type="entry name" value="Amino_acid_permease_fungi"/>
</dbReference>
<dbReference type="InterPro" id="IPR050524">
    <property type="entry name" value="APC_YAT"/>
</dbReference>
<dbReference type="NCBIfam" id="TIGR00913">
    <property type="entry name" value="2A0310"/>
    <property type="match status" value="1"/>
</dbReference>
<dbReference type="PANTHER" id="PTHR43341">
    <property type="entry name" value="AMINO ACID PERMEASE"/>
    <property type="match status" value="1"/>
</dbReference>
<dbReference type="PANTHER" id="PTHR43341:SF9">
    <property type="entry name" value="DICARBOXYLIC AMINO ACID PERMEASE"/>
    <property type="match status" value="1"/>
</dbReference>
<dbReference type="Pfam" id="PF00324">
    <property type="entry name" value="AA_permease"/>
    <property type="match status" value="1"/>
</dbReference>
<dbReference type="PROSITE" id="PS00218">
    <property type="entry name" value="AMINO_ACID_PERMEASE_1"/>
    <property type="match status" value="1"/>
</dbReference>
<keyword id="KW-0029">Amino-acid transport</keyword>
<keyword id="KW-1017">Isopeptide bond</keyword>
<keyword id="KW-0472">Membrane</keyword>
<keyword id="KW-0597">Phosphoprotein</keyword>
<keyword id="KW-1185">Reference proteome</keyword>
<keyword id="KW-0812">Transmembrane</keyword>
<keyword id="KW-1133">Transmembrane helix</keyword>
<keyword id="KW-0813">Transport</keyword>
<keyword id="KW-0832">Ubl conjugation</keyword>
<accession>P53388</accession>
<accession>D6W3A5</accession>
<comment type="function">
    <text evidence="3">Can transport glutamate, aspartate, glutamine, asparagine, serine, alanine and glycine.</text>
</comment>
<comment type="subcellular location">
    <subcellularLocation>
        <location>Membrane</location>
        <topology>Multi-pass membrane protein</topology>
    </subcellularLocation>
</comment>
<comment type="miscellaneous">
    <text evidence="4">Present with 432 molecules/cell in log phase SD medium.</text>
</comment>
<comment type="similarity">
    <text evidence="5">Belongs to the amino acid-polyamine-organocation (APC) superfamily. YAT (TC 2.A.3.10) family.</text>
</comment>